<proteinExistence type="inferred from homology"/>
<organism>
    <name type="scientific">Methanobrevibacter smithii (strain ATCC 35061 / DSM 861 / OCM 144 / PS)</name>
    <dbReference type="NCBI Taxonomy" id="420247"/>
    <lineage>
        <taxon>Archaea</taxon>
        <taxon>Methanobacteriati</taxon>
        <taxon>Methanobacteriota</taxon>
        <taxon>Methanomada group</taxon>
        <taxon>Methanobacteria</taxon>
        <taxon>Methanobacteriales</taxon>
        <taxon>Methanobacteriaceae</taxon>
        <taxon>Methanobrevibacter</taxon>
    </lineage>
</organism>
<feature type="chain" id="PRO_0000354226" description="Small ribosomal subunit protein uS15">
    <location>
        <begin position="1"/>
        <end position="132"/>
    </location>
</feature>
<reference key="1">
    <citation type="journal article" date="2007" name="Proc. Natl. Acad. Sci. U.S.A.">
        <title>Genomic and metabolic adaptations of Methanobrevibacter smithii to the human gut.</title>
        <authorList>
            <person name="Samuel B.S."/>
            <person name="Hansen E.E."/>
            <person name="Manchester J.K."/>
            <person name="Coutinho P.M."/>
            <person name="Henrissat B."/>
            <person name="Fulton R."/>
            <person name="Latreille P."/>
            <person name="Kim K."/>
            <person name="Wilson R.K."/>
            <person name="Gordon J.I."/>
        </authorList>
    </citation>
    <scope>NUCLEOTIDE SEQUENCE [LARGE SCALE GENOMIC DNA]</scope>
    <source>
        <strain>ATCC 35061 / DSM 861 / OCM 144 / PS</strain>
    </source>
</reference>
<accession>A5UMH1</accession>
<comment type="subunit">
    <text evidence="1">Part of the 30S ribosomal subunit.</text>
</comment>
<comment type="similarity">
    <text evidence="1">Belongs to the universal ribosomal protein uS15 family.</text>
</comment>
<name>RS15_METS3</name>
<gene>
    <name evidence="1" type="primary">rps15</name>
    <name type="ordered locus">Msm_1194</name>
</gene>
<protein>
    <recommendedName>
        <fullName evidence="1">Small ribosomal subunit protein uS15</fullName>
    </recommendedName>
    <alternativeName>
        <fullName evidence="2">30S ribosomal protein S15</fullName>
    </alternativeName>
</protein>
<keyword id="KW-0687">Ribonucleoprotein</keyword>
<keyword id="KW-0689">Ribosomal protein</keyword>
<evidence type="ECO:0000255" key="1">
    <source>
        <dbReference type="HAMAP-Rule" id="MF_01343"/>
    </source>
</evidence>
<evidence type="ECO:0000305" key="2"/>
<dbReference type="EMBL" id="CP000678">
    <property type="protein sequence ID" value="ABQ87399.1"/>
    <property type="molecule type" value="Genomic_DNA"/>
</dbReference>
<dbReference type="RefSeq" id="WP_004032740.1">
    <property type="nucleotide sequence ID" value="NZ_CP117965.1"/>
</dbReference>
<dbReference type="SMR" id="A5UMH1"/>
<dbReference type="STRING" id="420247.Msm_1194"/>
<dbReference type="EnsemblBacteria" id="ABQ87399">
    <property type="protein sequence ID" value="ABQ87399"/>
    <property type="gene ID" value="Msm_1194"/>
</dbReference>
<dbReference type="KEGG" id="msi:Msm_1194"/>
<dbReference type="PATRIC" id="fig|420247.28.peg.1193"/>
<dbReference type="eggNOG" id="arCOG04185">
    <property type="taxonomic scope" value="Archaea"/>
</dbReference>
<dbReference type="HOGENOM" id="CLU_090139_2_0_2"/>
<dbReference type="Proteomes" id="UP000001992">
    <property type="component" value="Chromosome"/>
</dbReference>
<dbReference type="GO" id="GO:0022627">
    <property type="term" value="C:cytosolic small ribosomal subunit"/>
    <property type="evidence" value="ECO:0007669"/>
    <property type="project" value="TreeGrafter"/>
</dbReference>
<dbReference type="GO" id="GO:0070181">
    <property type="term" value="F:small ribosomal subunit rRNA binding"/>
    <property type="evidence" value="ECO:0007669"/>
    <property type="project" value="TreeGrafter"/>
</dbReference>
<dbReference type="GO" id="GO:0003735">
    <property type="term" value="F:structural constituent of ribosome"/>
    <property type="evidence" value="ECO:0007669"/>
    <property type="project" value="InterPro"/>
</dbReference>
<dbReference type="GO" id="GO:0006412">
    <property type="term" value="P:translation"/>
    <property type="evidence" value="ECO:0007669"/>
    <property type="project" value="UniProtKB-UniRule"/>
</dbReference>
<dbReference type="CDD" id="cd00677">
    <property type="entry name" value="S15_NS1_EPRS_RNA-bind"/>
    <property type="match status" value="1"/>
</dbReference>
<dbReference type="FunFam" id="1.10.287.10:FF:000003">
    <property type="entry name" value="40S ribosomal protein S13"/>
    <property type="match status" value="1"/>
</dbReference>
<dbReference type="Gene3D" id="4.10.860.130">
    <property type="match status" value="1"/>
</dbReference>
<dbReference type="Gene3D" id="1.10.287.10">
    <property type="entry name" value="S15/NS1, RNA-binding"/>
    <property type="match status" value="1"/>
</dbReference>
<dbReference type="HAMAP" id="MF_01343_A">
    <property type="entry name" value="Ribosomal_uS15_A"/>
    <property type="match status" value="1"/>
</dbReference>
<dbReference type="InterPro" id="IPR000589">
    <property type="entry name" value="Ribosomal_uS15"/>
</dbReference>
<dbReference type="InterPro" id="IPR023029">
    <property type="entry name" value="Ribosomal_uS15_arc_euk"/>
</dbReference>
<dbReference type="InterPro" id="IPR012606">
    <property type="entry name" value="Ribosomal_uS15_N"/>
</dbReference>
<dbReference type="InterPro" id="IPR009068">
    <property type="entry name" value="uS15_NS1_RNA-bd_sf"/>
</dbReference>
<dbReference type="NCBIfam" id="NF006331">
    <property type="entry name" value="PRK08561.1"/>
    <property type="match status" value="1"/>
</dbReference>
<dbReference type="PANTHER" id="PTHR11885">
    <property type="entry name" value="RIBOSOMAL PROTEIN S15P/S13E"/>
    <property type="match status" value="1"/>
</dbReference>
<dbReference type="PANTHER" id="PTHR11885:SF6">
    <property type="entry name" value="SMALL RIBOSOMAL SUBUNIT PROTEIN US15"/>
    <property type="match status" value="1"/>
</dbReference>
<dbReference type="Pfam" id="PF08069">
    <property type="entry name" value="Ribosomal_S13_N"/>
    <property type="match status" value="1"/>
</dbReference>
<dbReference type="Pfam" id="PF00312">
    <property type="entry name" value="Ribosomal_S15"/>
    <property type="match status" value="1"/>
</dbReference>
<dbReference type="SMART" id="SM01386">
    <property type="entry name" value="Ribosomal_S13_N"/>
    <property type="match status" value="1"/>
</dbReference>
<dbReference type="SMART" id="SM01387">
    <property type="entry name" value="Ribosomal_S15"/>
    <property type="match status" value="1"/>
</dbReference>
<dbReference type="SUPFAM" id="SSF47060">
    <property type="entry name" value="S15/NS1 RNA-binding domain"/>
    <property type="match status" value="1"/>
</dbReference>
<dbReference type="PROSITE" id="PS00362">
    <property type="entry name" value="RIBOSOMAL_S15"/>
    <property type="match status" value="1"/>
</dbReference>
<sequence length="132" mass="15269">MARPEWVTYSDEEIEEMILKFNKEGKSTSEIGIILRDQYGIPSVKEVTGERITQILKRNDQAGKYPEDLMNLIKRAVNIRDHLAENPKDLHSKRGLTIIESRIRRLASYYVNEGALPEGWRYNPKEAALLVK</sequence>